<reference key="1">
    <citation type="submission" date="2006-09" db="EMBL/GenBank/DDBJ databases">
        <title>Complete sequence of chromosome 1 of Shewanella sp. ANA-3.</title>
        <authorList>
            <person name="Copeland A."/>
            <person name="Lucas S."/>
            <person name="Lapidus A."/>
            <person name="Barry K."/>
            <person name="Detter J.C."/>
            <person name="Glavina del Rio T."/>
            <person name="Hammon N."/>
            <person name="Israni S."/>
            <person name="Dalin E."/>
            <person name="Tice H."/>
            <person name="Pitluck S."/>
            <person name="Chertkov O."/>
            <person name="Brettin T."/>
            <person name="Bruce D."/>
            <person name="Han C."/>
            <person name="Tapia R."/>
            <person name="Gilna P."/>
            <person name="Schmutz J."/>
            <person name="Larimer F."/>
            <person name="Land M."/>
            <person name="Hauser L."/>
            <person name="Kyrpides N."/>
            <person name="Kim E."/>
            <person name="Newman D."/>
            <person name="Salticov C."/>
            <person name="Konstantinidis K."/>
            <person name="Klappenback J."/>
            <person name="Tiedje J."/>
            <person name="Richardson P."/>
        </authorList>
    </citation>
    <scope>NUCLEOTIDE SEQUENCE [LARGE SCALE GENOMIC DNA]</scope>
    <source>
        <strain>ANA-3</strain>
    </source>
</reference>
<name>ADD_SHESA</name>
<keyword id="KW-0378">Hydrolase</keyword>
<keyword id="KW-0479">Metal-binding</keyword>
<keyword id="KW-0546">Nucleotide metabolism</keyword>
<keyword id="KW-0862">Zinc</keyword>
<sequence>MINTSIPLVDLHRHLDGNVRVNTIWELGHQHGIALPADSLETLAPFVQIQGKETSLVAFLKKLDWMVAVLADLDAVKRVAYENVADAALSGLDYAELRFSPYYMAMNHKLPIEGVVEAVIDGVKAGLKDYQVKINLIGIMSRSFGQAACTQELEGLLAHKQHLVAMDLAGDELGFPGELFNEHFKRVRDAGLAITAHAGEAAGSQSMWQAIQELGATRIGHGVNAIHDPKLMEYLAKHRIGIESCPTSNLHTSTVSSYAEHPFRTFMDAGVLISLNTDDPGVSAIDIKHEYRIAKSELGLSDAELAQVQRNGVEMAFLSESERKALYAAKA</sequence>
<gene>
    <name evidence="1" type="primary">add</name>
    <name type="ordered locus">Shewana3_4117</name>
</gene>
<dbReference type="EC" id="3.5.4.4" evidence="1"/>
<dbReference type="EMBL" id="CP000469">
    <property type="protein sequence ID" value="ABK50334.1"/>
    <property type="molecule type" value="Genomic_DNA"/>
</dbReference>
<dbReference type="RefSeq" id="WP_011718822.1">
    <property type="nucleotide sequence ID" value="NC_008577.1"/>
</dbReference>
<dbReference type="SMR" id="A0L2R5"/>
<dbReference type="STRING" id="94122.Shewana3_4117"/>
<dbReference type="GeneID" id="75186642"/>
<dbReference type="KEGG" id="shn:Shewana3_4117"/>
<dbReference type="eggNOG" id="COG1816">
    <property type="taxonomic scope" value="Bacteria"/>
</dbReference>
<dbReference type="HOGENOM" id="CLU_039228_0_2_6"/>
<dbReference type="OrthoDB" id="105475at2"/>
<dbReference type="Proteomes" id="UP000002589">
    <property type="component" value="Chromosome"/>
</dbReference>
<dbReference type="GO" id="GO:0005829">
    <property type="term" value="C:cytosol"/>
    <property type="evidence" value="ECO:0007669"/>
    <property type="project" value="TreeGrafter"/>
</dbReference>
<dbReference type="GO" id="GO:0046936">
    <property type="term" value="F:2'-deoxyadenosine deaminase activity"/>
    <property type="evidence" value="ECO:0007669"/>
    <property type="project" value="RHEA"/>
</dbReference>
<dbReference type="GO" id="GO:0004000">
    <property type="term" value="F:adenosine deaminase activity"/>
    <property type="evidence" value="ECO:0007669"/>
    <property type="project" value="UniProtKB-UniRule"/>
</dbReference>
<dbReference type="GO" id="GO:0008270">
    <property type="term" value="F:zinc ion binding"/>
    <property type="evidence" value="ECO:0007669"/>
    <property type="project" value="UniProtKB-UniRule"/>
</dbReference>
<dbReference type="GO" id="GO:0006154">
    <property type="term" value="P:adenosine catabolic process"/>
    <property type="evidence" value="ECO:0007669"/>
    <property type="project" value="TreeGrafter"/>
</dbReference>
<dbReference type="GO" id="GO:0043103">
    <property type="term" value="P:hypoxanthine salvage"/>
    <property type="evidence" value="ECO:0007669"/>
    <property type="project" value="TreeGrafter"/>
</dbReference>
<dbReference type="GO" id="GO:0046103">
    <property type="term" value="P:inosine biosynthetic process"/>
    <property type="evidence" value="ECO:0007669"/>
    <property type="project" value="TreeGrafter"/>
</dbReference>
<dbReference type="GO" id="GO:0009117">
    <property type="term" value="P:nucleotide metabolic process"/>
    <property type="evidence" value="ECO:0007669"/>
    <property type="project" value="UniProtKB-KW"/>
</dbReference>
<dbReference type="GO" id="GO:0009168">
    <property type="term" value="P:purine ribonucleoside monophosphate biosynthetic process"/>
    <property type="evidence" value="ECO:0007669"/>
    <property type="project" value="UniProtKB-UniRule"/>
</dbReference>
<dbReference type="FunFam" id="3.20.20.140:FF:000009">
    <property type="entry name" value="Adenosine deaminase"/>
    <property type="match status" value="1"/>
</dbReference>
<dbReference type="Gene3D" id="3.20.20.140">
    <property type="entry name" value="Metal-dependent hydrolases"/>
    <property type="match status" value="1"/>
</dbReference>
<dbReference type="HAMAP" id="MF_00540">
    <property type="entry name" value="A_deaminase"/>
    <property type="match status" value="1"/>
</dbReference>
<dbReference type="InterPro" id="IPR006650">
    <property type="entry name" value="A/AMP_deam_AS"/>
</dbReference>
<dbReference type="InterPro" id="IPR028893">
    <property type="entry name" value="A_deaminase"/>
</dbReference>
<dbReference type="InterPro" id="IPR001365">
    <property type="entry name" value="A_deaminase_dom"/>
</dbReference>
<dbReference type="InterPro" id="IPR006330">
    <property type="entry name" value="Ado/ade_deaminase"/>
</dbReference>
<dbReference type="InterPro" id="IPR032466">
    <property type="entry name" value="Metal_Hydrolase"/>
</dbReference>
<dbReference type="NCBIfam" id="TIGR01430">
    <property type="entry name" value="aden_deam"/>
    <property type="match status" value="1"/>
</dbReference>
<dbReference type="NCBIfam" id="NF006846">
    <property type="entry name" value="PRK09358.1-1"/>
    <property type="match status" value="1"/>
</dbReference>
<dbReference type="PANTHER" id="PTHR11409">
    <property type="entry name" value="ADENOSINE DEAMINASE"/>
    <property type="match status" value="1"/>
</dbReference>
<dbReference type="PANTHER" id="PTHR11409:SF43">
    <property type="entry name" value="ADENOSINE DEAMINASE"/>
    <property type="match status" value="1"/>
</dbReference>
<dbReference type="Pfam" id="PF00962">
    <property type="entry name" value="A_deaminase"/>
    <property type="match status" value="1"/>
</dbReference>
<dbReference type="SUPFAM" id="SSF51556">
    <property type="entry name" value="Metallo-dependent hydrolases"/>
    <property type="match status" value="1"/>
</dbReference>
<dbReference type="PROSITE" id="PS00485">
    <property type="entry name" value="A_DEAMINASE"/>
    <property type="match status" value="1"/>
</dbReference>
<feature type="chain" id="PRO_1000017700" description="Adenosine deaminase">
    <location>
        <begin position="1"/>
        <end position="331"/>
    </location>
</feature>
<feature type="active site" description="Proton donor" evidence="1">
    <location>
        <position position="200"/>
    </location>
</feature>
<feature type="binding site" evidence="1">
    <location>
        <position position="12"/>
    </location>
    <ligand>
        <name>Zn(2+)</name>
        <dbReference type="ChEBI" id="CHEBI:29105"/>
        <note>catalytic</note>
    </ligand>
</feature>
<feature type="binding site" evidence="1">
    <location>
        <position position="14"/>
    </location>
    <ligand>
        <name>substrate</name>
    </ligand>
</feature>
<feature type="binding site" evidence="1">
    <location>
        <position position="14"/>
    </location>
    <ligand>
        <name>Zn(2+)</name>
        <dbReference type="ChEBI" id="CHEBI:29105"/>
        <note>catalytic</note>
    </ligand>
</feature>
<feature type="binding site" evidence="1">
    <location>
        <position position="16"/>
    </location>
    <ligand>
        <name>substrate</name>
    </ligand>
</feature>
<feature type="binding site" evidence="1">
    <location>
        <position position="170"/>
    </location>
    <ligand>
        <name>substrate</name>
    </ligand>
</feature>
<feature type="binding site" evidence="1">
    <location>
        <position position="197"/>
    </location>
    <ligand>
        <name>Zn(2+)</name>
        <dbReference type="ChEBI" id="CHEBI:29105"/>
        <note>catalytic</note>
    </ligand>
</feature>
<feature type="binding site" evidence="1">
    <location>
        <position position="278"/>
    </location>
    <ligand>
        <name>Zn(2+)</name>
        <dbReference type="ChEBI" id="CHEBI:29105"/>
        <note>catalytic</note>
    </ligand>
</feature>
<feature type="binding site" evidence="1">
    <location>
        <position position="279"/>
    </location>
    <ligand>
        <name>substrate</name>
    </ligand>
</feature>
<feature type="site" description="Important for catalytic activity" evidence="1">
    <location>
        <position position="221"/>
    </location>
</feature>
<proteinExistence type="inferred from homology"/>
<protein>
    <recommendedName>
        <fullName evidence="1">Adenosine deaminase</fullName>
        <ecNumber evidence="1">3.5.4.4</ecNumber>
    </recommendedName>
    <alternativeName>
        <fullName evidence="1">Adenosine aminohydrolase</fullName>
    </alternativeName>
</protein>
<comment type="function">
    <text evidence="1">Catalyzes the hydrolytic deamination of adenosine and 2-deoxyadenosine.</text>
</comment>
<comment type="catalytic activity">
    <reaction evidence="1">
        <text>adenosine + H2O + H(+) = inosine + NH4(+)</text>
        <dbReference type="Rhea" id="RHEA:24408"/>
        <dbReference type="ChEBI" id="CHEBI:15377"/>
        <dbReference type="ChEBI" id="CHEBI:15378"/>
        <dbReference type="ChEBI" id="CHEBI:16335"/>
        <dbReference type="ChEBI" id="CHEBI:17596"/>
        <dbReference type="ChEBI" id="CHEBI:28938"/>
        <dbReference type="EC" id="3.5.4.4"/>
    </reaction>
    <physiologicalReaction direction="left-to-right" evidence="1">
        <dbReference type="Rhea" id="RHEA:24409"/>
    </physiologicalReaction>
</comment>
<comment type="catalytic activity">
    <reaction evidence="1">
        <text>2'-deoxyadenosine + H2O + H(+) = 2'-deoxyinosine + NH4(+)</text>
        <dbReference type="Rhea" id="RHEA:28190"/>
        <dbReference type="ChEBI" id="CHEBI:15377"/>
        <dbReference type="ChEBI" id="CHEBI:15378"/>
        <dbReference type="ChEBI" id="CHEBI:17256"/>
        <dbReference type="ChEBI" id="CHEBI:28938"/>
        <dbReference type="ChEBI" id="CHEBI:28997"/>
        <dbReference type="EC" id="3.5.4.4"/>
    </reaction>
    <physiologicalReaction direction="left-to-right" evidence="1">
        <dbReference type="Rhea" id="RHEA:28191"/>
    </physiologicalReaction>
</comment>
<comment type="cofactor">
    <cofactor evidence="1">
        <name>Zn(2+)</name>
        <dbReference type="ChEBI" id="CHEBI:29105"/>
    </cofactor>
    <text evidence="1">Binds 1 zinc ion per subunit.</text>
</comment>
<comment type="similarity">
    <text evidence="1">Belongs to the metallo-dependent hydrolases superfamily. Adenosine and AMP deaminases family. Adenosine deaminase subfamily.</text>
</comment>
<evidence type="ECO:0000255" key="1">
    <source>
        <dbReference type="HAMAP-Rule" id="MF_00540"/>
    </source>
</evidence>
<organism>
    <name type="scientific">Shewanella sp. (strain ANA-3)</name>
    <dbReference type="NCBI Taxonomy" id="94122"/>
    <lineage>
        <taxon>Bacteria</taxon>
        <taxon>Pseudomonadati</taxon>
        <taxon>Pseudomonadota</taxon>
        <taxon>Gammaproteobacteria</taxon>
        <taxon>Alteromonadales</taxon>
        <taxon>Shewanellaceae</taxon>
        <taxon>Shewanella</taxon>
    </lineage>
</organism>
<accession>A0L2R5</accession>